<sequence>MATTLNPSEISDLIKTRIEAVKLSAESRNEGSVTSVSDGIVRIFGLADVMQGEMIELPNNTFALALNLERDSVGAVVLGDYENLREGDVAKTTGRILEVPVGPELLGRVVNALGEPIDGKGPLGATQTAPVERVAPGVIWRKSVDQPVQTGYKSVDAMIPIGRGQRELVIGDRQTGKTALAIDAVINQKGTGIKCVYVAIGQKASTVANIVRKLEENGALAHTVVVAATASESAAMQYISPYAGCTMGEYFMDRGEDALIVYDDLSKQAVAYRQISLLLKRPPGREAYPGDVFYLHSRLLERAARVSEDYVEKFTNGAVTGKTGSLTALPIIETQAGDVSAFVPTNVISITDGQIFLETDLFNAGIRPAVNAGISVSRVGGAAQTKIIKKLSGGIRISLAQYRELAAFAQFASDLDEATRKQLERGQRVTELMKQKQYAPMSIANQALSIYAVNEGYLDDVPVNKLLAFEEGLHAHFANTQGELVSKINSTGGWDNDIEASFKKGIQEFKTTGTW</sequence>
<reference key="1">
    <citation type="journal article" date="2005" name="Nucleic Acids Res.">
        <title>The genome sequence of Xanthomonas oryzae pathovar oryzae KACC10331, the bacterial blight pathogen of rice.</title>
        <authorList>
            <person name="Lee B.-M."/>
            <person name="Park Y.-J."/>
            <person name="Park D.-S."/>
            <person name="Kang H.-W."/>
            <person name="Kim J.-G."/>
            <person name="Song E.-S."/>
            <person name="Park I.-C."/>
            <person name="Yoon U.-H."/>
            <person name="Hahn J.-H."/>
            <person name="Koo B.-S."/>
            <person name="Lee G.-B."/>
            <person name="Kim H."/>
            <person name="Park H.-S."/>
            <person name="Yoon K.-O."/>
            <person name="Kim J.-H."/>
            <person name="Jung C.-H."/>
            <person name="Koh N.-H."/>
            <person name="Seo J.-S."/>
            <person name="Go S.-J."/>
        </authorList>
    </citation>
    <scope>NUCLEOTIDE SEQUENCE [LARGE SCALE GENOMIC DNA]</scope>
    <source>
        <strain>KACC10331 / KXO85</strain>
    </source>
</reference>
<keyword id="KW-0066">ATP synthesis</keyword>
<keyword id="KW-0067">ATP-binding</keyword>
<keyword id="KW-0997">Cell inner membrane</keyword>
<keyword id="KW-1003">Cell membrane</keyword>
<keyword id="KW-0139">CF(1)</keyword>
<keyword id="KW-0375">Hydrogen ion transport</keyword>
<keyword id="KW-0406">Ion transport</keyword>
<keyword id="KW-0472">Membrane</keyword>
<keyword id="KW-0547">Nucleotide-binding</keyword>
<keyword id="KW-1185">Reference proteome</keyword>
<keyword id="KW-1278">Translocase</keyword>
<keyword id="KW-0813">Transport</keyword>
<dbReference type="EC" id="7.1.2.2" evidence="1"/>
<dbReference type="EMBL" id="AE013598">
    <property type="protein sequence ID" value="AAW73984.1"/>
    <property type="molecule type" value="Genomic_DNA"/>
</dbReference>
<dbReference type="SMR" id="Q5H4Y6"/>
<dbReference type="STRING" id="291331.XOO0730"/>
<dbReference type="KEGG" id="xoo:XOO0730"/>
<dbReference type="HOGENOM" id="CLU_010091_2_1_6"/>
<dbReference type="Proteomes" id="UP000006735">
    <property type="component" value="Chromosome"/>
</dbReference>
<dbReference type="GO" id="GO:0005886">
    <property type="term" value="C:plasma membrane"/>
    <property type="evidence" value="ECO:0007669"/>
    <property type="project" value="UniProtKB-SubCell"/>
</dbReference>
<dbReference type="GO" id="GO:0045259">
    <property type="term" value="C:proton-transporting ATP synthase complex"/>
    <property type="evidence" value="ECO:0007669"/>
    <property type="project" value="UniProtKB-KW"/>
</dbReference>
<dbReference type="GO" id="GO:0043531">
    <property type="term" value="F:ADP binding"/>
    <property type="evidence" value="ECO:0007669"/>
    <property type="project" value="TreeGrafter"/>
</dbReference>
<dbReference type="GO" id="GO:0005524">
    <property type="term" value="F:ATP binding"/>
    <property type="evidence" value="ECO:0007669"/>
    <property type="project" value="UniProtKB-UniRule"/>
</dbReference>
<dbReference type="GO" id="GO:0046933">
    <property type="term" value="F:proton-transporting ATP synthase activity, rotational mechanism"/>
    <property type="evidence" value="ECO:0007669"/>
    <property type="project" value="UniProtKB-UniRule"/>
</dbReference>
<dbReference type="CDD" id="cd18113">
    <property type="entry name" value="ATP-synt_F1_alpha_C"/>
    <property type="match status" value="1"/>
</dbReference>
<dbReference type="CDD" id="cd18116">
    <property type="entry name" value="ATP-synt_F1_alpha_N"/>
    <property type="match status" value="1"/>
</dbReference>
<dbReference type="CDD" id="cd01132">
    <property type="entry name" value="F1-ATPase_alpha_CD"/>
    <property type="match status" value="1"/>
</dbReference>
<dbReference type="FunFam" id="1.20.150.20:FF:000001">
    <property type="entry name" value="ATP synthase subunit alpha"/>
    <property type="match status" value="1"/>
</dbReference>
<dbReference type="FunFam" id="2.40.30.20:FF:000001">
    <property type="entry name" value="ATP synthase subunit alpha"/>
    <property type="match status" value="1"/>
</dbReference>
<dbReference type="FunFam" id="3.40.50.300:FF:000002">
    <property type="entry name" value="ATP synthase subunit alpha"/>
    <property type="match status" value="1"/>
</dbReference>
<dbReference type="Gene3D" id="2.40.30.20">
    <property type="match status" value="1"/>
</dbReference>
<dbReference type="Gene3D" id="1.20.150.20">
    <property type="entry name" value="ATP synthase alpha/beta chain, C-terminal domain"/>
    <property type="match status" value="1"/>
</dbReference>
<dbReference type="Gene3D" id="3.40.50.300">
    <property type="entry name" value="P-loop containing nucleotide triphosphate hydrolases"/>
    <property type="match status" value="1"/>
</dbReference>
<dbReference type="HAMAP" id="MF_01346">
    <property type="entry name" value="ATP_synth_alpha_bact"/>
    <property type="match status" value="1"/>
</dbReference>
<dbReference type="InterPro" id="IPR023366">
    <property type="entry name" value="ATP_synth_asu-like_sf"/>
</dbReference>
<dbReference type="InterPro" id="IPR000793">
    <property type="entry name" value="ATP_synth_asu_C"/>
</dbReference>
<dbReference type="InterPro" id="IPR038376">
    <property type="entry name" value="ATP_synth_asu_C_sf"/>
</dbReference>
<dbReference type="InterPro" id="IPR033732">
    <property type="entry name" value="ATP_synth_F1_a_nt-bd_dom"/>
</dbReference>
<dbReference type="InterPro" id="IPR005294">
    <property type="entry name" value="ATP_synth_F1_asu"/>
</dbReference>
<dbReference type="InterPro" id="IPR020003">
    <property type="entry name" value="ATPase_a/bsu_AS"/>
</dbReference>
<dbReference type="InterPro" id="IPR004100">
    <property type="entry name" value="ATPase_F1/V1/A1_a/bsu_N"/>
</dbReference>
<dbReference type="InterPro" id="IPR036121">
    <property type="entry name" value="ATPase_F1/V1/A1_a/bsu_N_sf"/>
</dbReference>
<dbReference type="InterPro" id="IPR000194">
    <property type="entry name" value="ATPase_F1/V1/A1_a/bsu_nucl-bd"/>
</dbReference>
<dbReference type="InterPro" id="IPR027417">
    <property type="entry name" value="P-loop_NTPase"/>
</dbReference>
<dbReference type="NCBIfam" id="TIGR00962">
    <property type="entry name" value="atpA"/>
    <property type="match status" value="1"/>
</dbReference>
<dbReference type="NCBIfam" id="NF009884">
    <property type="entry name" value="PRK13343.1"/>
    <property type="match status" value="1"/>
</dbReference>
<dbReference type="PANTHER" id="PTHR48082">
    <property type="entry name" value="ATP SYNTHASE SUBUNIT ALPHA, MITOCHONDRIAL"/>
    <property type="match status" value="1"/>
</dbReference>
<dbReference type="PANTHER" id="PTHR48082:SF2">
    <property type="entry name" value="ATP SYNTHASE SUBUNIT ALPHA, MITOCHONDRIAL"/>
    <property type="match status" value="1"/>
</dbReference>
<dbReference type="Pfam" id="PF00006">
    <property type="entry name" value="ATP-synt_ab"/>
    <property type="match status" value="1"/>
</dbReference>
<dbReference type="Pfam" id="PF00306">
    <property type="entry name" value="ATP-synt_ab_C"/>
    <property type="match status" value="1"/>
</dbReference>
<dbReference type="Pfam" id="PF02874">
    <property type="entry name" value="ATP-synt_ab_N"/>
    <property type="match status" value="1"/>
</dbReference>
<dbReference type="SUPFAM" id="SSF47917">
    <property type="entry name" value="C-terminal domain of alpha and beta subunits of F1 ATP synthase"/>
    <property type="match status" value="1"/>
</dbReference>
<dbReference type="SUPFAM" id="SSF50615">
    <property type="entry name" value="N-terminal domain of alpha and beta subunits of F1 ATP synthase"/>
    <property type="match status" value="1"/>
</dbReference>
<dbReference type="SUPFAM" id="SSF52540">
    <property type="entry name" value="P-loop containing nucleoside triphosphate hydrolases"/>
    <property type="match status" value="1"/>
</dbReference>
<dbReference type="PROSITE" id="PS00152">
    <property type="entry name" value="ATPASE_ALPHA_BETA"/>
    <property type="match status" value="1"/>
</dbReference>
<feature type="chain" id="PRO_0000238406" description="ATP synthase subunit alpha">
    <location>
        <begin position="1"/>
        <end position="515"/>
    </location>
</feature>
<feature type="binding site" evidence="1">
    <location>
        <begin position="171"/>
        <end position="178"/>
    </location>
    <ligand>
        <name>ATP</name>
        <dbReference type="ChEBI" id="CHEBI:30616"/>
    </ligand>
</feature>
<feature type="site" description="Required for activity" evidence="1">
    <location>
        <position position="375"/>
    </location>
</feature>
<organism>
    <name type="scientific">Xanthomonas oryzae pv. oryzae (strain KACC10331 / KXO85)</name>
    <dbReference type="NCBI Taxonomy" id="291331"/>
    <lineage>
        <taxon>Bacteria</taxon>
        <taxon>Pseudomonadati</taxon>
        <taxon>Pseudomonadota</taxon>
        <taxon>Gammaproteobacteria</taxon>
        <taxon>Lysobacterales</taxon>
        <taxon>Lysobacteraceae</taxon>
        <taxon>Xanthomonas</taxon>
    </lineage>
</organism>
<comment type="function">
    <text evidence="1">Produces ATP from ADP in the presence of a proton gradient across the membrane. The alpha chain is a regulatory subunit.</text>
</comment>
<comment type="catalytic activity">
    <reaction evidence="1">
        <text>ATP + H2O + 4 H(+)(in) = ADP + phosphate + 5 H(+)(out)</text>
        <dbReference type="Rhea" id="RHEA:57720"/>
        <dbReference type="ChEBI" id="CHEBI:15377"/>
        <dbReference type="ChEBI" id="CHEBI:15378"/>
        <dbReference type="ChEBI" id="CHEBI:30616"/>
        <dbReference type="ChEBI" id="CHEBI:43474"/>
        <dbReference type="ChEBI" id="CHEBI:456216"/>
        <dbReference type="EC" id="7.1.2.2"/>
    </reaction>
</comment>
<comment type="subunit">
    <text evidence="1">F-type ATPases have 2 components, CF(1) - the catalytic core - and CF(0) - the membrane proton channel. CF(1) has five subunits: alpha(3), beta(3), gamma(1), delta(1), epsilon(1). CF(0) has three main subunits: a(1), b(2) and c(9-12). The alpha and beta chains form an alternating ring which encloses part of the gamma chain. CF(1) is attached to CF(0) by a central stalk formed by the gamma and epsilon chains, while a peripheral stalk is formed by the delta and b chains.</text>
</comment>
<comment type="subcellular location">
    <subcellularLocation>
        <location evidence="1">Cell inner membrane</location>
        <topology evidence="1">Peripheral membrane protein</topology>
    </subcellularLocation>
</comment>
<comment type="similarity">
    <text evidence="1">Belongs to the ATPase alpha/beta chains family.</text>
</comment>
<protein>
    <recommendedName>
        <fullName evidence="1">ATP synthase subunit alpha</fullName>
        <ecNumber evidence="1">7.1.2.2</ecNumber>
    </recommendedName>
    <alternativeName>
        <fullName evidence="1">ATP synthase F1 sector subunit alpha</fullName>
    </alternativeName>
    <alternativeName>
        <fullName evidence="1">F-ATPase subunit alpha</fullName>
    </alternativeName>
</protein>
<name>ATPA_XANOR</name>
<accession>Q5H4Y6</accession>
<evidence type="ECO:0000255" key="1">
    <source>
        <dbReference type="HAMAP-Rule" id="MF_01346"/>
    </source>
</evidence>
<proteinExistence type="inferred from homology"/>
<gene>
    <name evidence="1" type="primary">atpA</name>
    <name type="ordered locus">XOO0730</name>
</gene>